<proteinExistence type="inferred from homology"/>
<keyword id="KW-0963">Cytoplasm</keyword>
<keyword id="KW-0444">Lipid biosynthesis</keyword>
<keyword id="KW-0443">Lipid metabolism</keyword>
<keyword id="KW-0594">Phospholipid biosynthesis</keyword>
<keyword id="KW-1208">Phospholipid metabolism</keyword>
<keyword id="KW-1185">Reference proteome</keyword>
<keyword id="KW-0808">Transferase</keyword>
<accession>Q6F1N6</accession>
<comment type="function">
    <text evidence="1">Catalyzes the reversible formation of acyl-phosphate (acyl-PO(4)) from acyl-[acyl-carrier-protein] (acyl-ACP). This enzyme utilizes acyl-ACP as fatty acyl donor, but not acyl-CoA.</text>
</comment>
<comment type="catalytic activity">
    <reaction evidence="1">
        <text>a fatty acyl-[ACP] + phosphate = an acyl phosphate + holo-[ACP]</text>
        <dbReference type="Rhea" id="RHEA:42292"/>
        <dbReference type="Rhea" id="RHEA-COMP:9685"/>
        <dbReference type="Rhea" id="RHEA-COMP:14125"/>
        <dbReference type="ChEBI" id="CHEBI:43474"/>
        <dbReference type="ChEBI" id="CHEBI:59918"/>
        <dbReference type="ChEBI" id="CHEBI:64479"/>
        <dbReference type="ChEBI" id="CHEBI:138651"/>
        <dbReference type="EC" id="2.3.1.274"/>
    </reaction>
</comment>
<comment type="pathway">
    <text evidence="1">Lipid metabolism; phospholipid metabolism.</text>
</comment>
<comment type="subunit">
    <text evidence="1">Homodimer. Probably interacts with PlsY.</text>
</comment>
<comment type="subcellular location">
    <subcellularLocation>
        <location evidence="1">Cytoplasm</location>
    </subcellularLocation>
    <text evidence="1">Associated with the membrane possibly through PlsY.</text>
</comment>
<comment type="similarity">
    <text evidence="1">Belongs to the PlsX family.</text>
</comment>
<feature type="chain" id="PRO_0000189902" description="Phosphate acyltransferase">
    <location>
        <begin position="1"/>
        <end position="331"/>
    </location>
</feature>
<dbReference type="EC" id="2.3.1.274" evidence="1"/>
<dbReference type="EMBL" id="AE017263">
    <property type="protein sequence ID" value="AAT75587.1"/>
    <property type="molecule type" value="Genomic_DNA"/>
</dbReference>
<dbReference type="RefSeq" id="WP_011183127.1">
    <property type="nucleotide sequence ID" value="NC_006055.1"/>
</dbReference>
<dbReference type="RefSeq" id="YP_053471.1">
    <property type="nucleotide sequence ID" value="NC_006055.1"/>
</dbReference>
<dbReference type="SMR" id="Q6F1N6"/>
<dbReference type="STRING" id="265311.Mfl230"/>
<dbReference type="PaxDb" id="265311-Mfl230"/>
<dbReference type="EnsemblBacteria" id="AAT75587">
    <property type="protein sequence ID" value="AAT75587"/>
    <property type="gene ID" value="Mfl230"/>
</dbReference>
<dbReference type="GeneID" id="2897976"/>
<dbReference type="KEGG" id="mfl:Mfl230"/>
<dbReference type="PATRIC" id="fig|265311.5.peg.230"/>
<dbReference type="eggNOG" id="COG0416">
    <property type="taxonomic scope" value="Bacteria"/>
</dbReference>
<dbReference type="HOGENOM" id="CLU_039379_1_1_14"/>
<dbReference type="OrthoDB" id="9806408at2"/>
<dbReference type="UniPathway" id="UPA00085"/>
<dbReference type="Proteomes" id="UP000006647">
    <property type="component" value="Chromosome"/>
</dbReference>
<dbReference type="GO" id="GO:0005737">
    <property type="term" value="C:cytoplasm"/>
    <property type="evidence" value="ECO:0007669"/>
    <property type="project" value="UniProtKB-SubCell"/>
</dbReference>
<dbReference type="GO" id="GO:0043811">
    <property type="term" value="F:phosphate:acyl-[acyl carrier protein] acyltransferase activity"/>
    <property type="evidence" value="ECO:0007669"/>
    <property type="project" value="UniProtKB-UniRule"/>
</dbReference>
<dbReference type="GO" id="GO:0006633">
    <property type="term" value="P:fatty acid biosynthetic process"/>
    <property type="evidence" value="ECO:0007669"/>
    <property type="project" value="UniProtKB-UniRule"/>
</dbReference>
<dbReference type="GO" id="GO:0008654">
    <property type="term" value="P:phospholipid biosynthetic process"/>
    <property type="evidence" value="ECO:0007669"/>
    <property type="project" value="UniProtKB-KW"/>
</dbReference>
<dbReference type="Gene3D" id="3.40.718.10">
    <property type="entry name" value="Isopropylmalate Dehydrogenase"/>
    <property type="match status" value="1"/>
</dbReference>
<dbReference type="HAMAP" id="MF_00019">
    <property type="entry name" value="PlsX"/>
    <property type="match status" value="1"/>
</dbReference>
<dbReference type="InterPro" id="IPR003664">
    <property type="entry name" value="FA_synthesis"/>
</dbReference>
<dbReference type="InterPro" id="IPR012281">
    <property type="entry name" value="Phospholipid_synth_PlsX-like"/>
</dbReference>
<dbReference type="NCBIfam" id="TIGR00182">
    <property type="entry name" value="plsX"/>
    <property type="match status" value="1"/>
</dbReference>
<dbReference type="PANTHER" id="PTHR30100">
    <property type="entry name" value="FATTY ACID/PHOSPHOLIPID SYNTHESIS PROTEIN PLSX"/>
    <property type="match status" value="1"/>
</dbReference>
<dbReference type="PANTHER" id="PTHR30100:SF1">
    <property type="entry name" value="PHOSPHATE ACYLTRANSFERASE"/>
    <property type="match status" value="1"/>
</dbReference>
<dbReference type="Pfam" id="PF02504">
    <property type="entry name" value="FA_synthesis"/>
    <property type="match status" value="1"/>
</dbReference>
<dbReference type="PIRSF" id="PIRSF002465">
    <property type="entry name" value="Phsphlp_syn_PlsX"/>
    <property type="match status" value="1"/>
</dbReference>
<dbReference type="SUPFAM" id="SSF53659">
    <property type="entry name" value="Isocitrate/Isopropylmalate dehydrogenase-like"/>
    <property type="match status" value="1"/>
</dbReference>
<name>PLSX_MESFL</name>
<gene>
    <name evidence="1" type="primary">plsX</name>
    <name type="ordered locus">Mfl230</name>
</gene>
<evidence type="ECO:0000255" key="1">
    <source>
        <dbReference type="HAMAP-Rule" id="MF_00019"/>
    </source>
</evidence>
<sequence length="331" mass="36585">MYKIAFDVMGSDNGSAVAIEAASRFIKSRKDLYLVFVGDEDQIKTSLEKFPIDESRFEILATKEFIDMNGSIMDIRRKKDSSMVRALETLKDKKVDAMITGGNSAAFIAGSHFILGELNGISRPGFMPTLPTAVSNKLTLLLDVGANLEADIEDIIGYAKMANIYAKNVLKIENPLIAQLNIGEEKSKGTLLQKEIYKELESDENINFFGNLESRDILAGKVDIIVTDGYTGNMCLKAFEGASKILMTEIKSQLYKTIFTKLKALTLKKSFDNVSKKFDYKNHSGAILLGVEGIAFKAHGSSDVKSFEATLRMTCDAVENDVLNKIKKELN</sequence>
<organism>
    <name type="scientific">Mesoplasma florum (strain ATCC 33453 / NBRC 100688 / NCTC 11704 / L1)</name>
    <name type="common">Acholeplasma florum</name>
    <dbReference type="NCBI Taxonomy" id="265311"/>
    <lineage>
        <taxon>Bacteria</taxon>
        <taxon>Bacillati</taxon>
        <taxon>Mycoplasmatota</taxon>
        <taxon>Mollicutes</taxon>
        <taxon>Entomoplasmatales</taxon>
        <taxon>Entomoplasmataceae</taxon>
        <taxon>Mesoplasma</taxon>
    </lineage>
</organism>
<reference key="1">
    <citation type="submission" date="2004-06" db="EMBL/GenBank/DDBJ databases">
        <authorList>
            <person name="Birren B.W."/>
            <person name="Stange-Thomann N."/>
            <person name="Hafez N."/>
            <person name="DeCaprio D."/>
            <person name="Fisher S."/>
            <person name="Butler J."/>
            <person name="Elkins T."/>
            <person name="Kodira C.D."/>
            <person name="Major J."/>
            <person name="Wang S."/>
            <person name="Nicol R."/>
            <person name="Nusbaum C."/>
        </authorList>
    </citation>
    <scope>NUCLEOTIDE SEQUENCE [LARGE SCALE GENOMIC DNA]</scope>
    <source>
        <strain>ATCC 33453 / NBRC 100688 / NCTC 11704 / L1</strain>
    </source>
</reference>
<protein>
    <recommendedName>
        <fullName evidence="1">Phosphate acyltransferase</fullName>
        <ecNumber evidence="1">2.3.1.274</ecNumber>
    </recommendedName>
    <alternativeName>
        <fullName evidence="1">Acyl-ACP phosphotransacylase</fullName>
    </alternativeName>
    <alternativeName>
        <fullName evidence="1">Acyl-[acyl-carrier-protein]--phosphate acyltransferase</fullName>
    </alternativeName>
    <alternativeName>
        <fullName evidence="1">Phosphate-acyl-ACP acyltransferase</fullName>
    </alternativeName>
</protein>